<proteinExistence type="inferred from homology"/>
<protein>
    <recommendedName>
        <fullName evidence="1">Cysteine--tRNA ligase</fullName>
        <ecNumber evidence="1">6.1.1.16</ecNumber>
    </recommendedName>
    <alternativeName>
        <fullName evidence="1">Cysteinyl-tRNA synthetase</fullName>
        <shortName evidence="1">CysRS</shortName>
    </alternativeName>
</protein>
<reference key="1">
    <citation type="journal article" date="2005" name="Science">
        <title>Extensive DNA inversions in the B. fragilis genome control variable gene expression.</title>
        <authorList>
            <person name="Cerdeno-Tarraga A.-M."/>
            <person name="Patrick S."/>
            <person name="Crossman L.C."/>
            <person name="Blakely G."/>
            <person name="Abratt V."/>
            <person name="Lennard N."/>
            <person name="Poxton I."/>
            <person name="Duerden B."/>
            <person name="Harris B."/>
            <person name="Quail M.A."/>
            <person name="Barron A."/>
            <person name="Clark L."/>
            <person name="Corton C."/>
            <person name="Doggett J."/>
            <person name="Holden M.T.G."/>
            <person name="Larke N."/>
            <person name="Line A."/>
            <person name="Lord A."/>
            <person name="Norbertczak H."/>
            <person name="Ormond D."/>
            <person name="Price C."/>
            <person name="Rabbinowitsch E."/>
            <person name="Woodward J."/>
            <person name="Barrell B.G."/>
            <person name="Parkhill J."/>
        </authorList>
    </citation>
    <scope>NUCLEOTIDE SEQUENCE [LARGE SCALE GENOMIC DNA]</scope>
    <source>
        <strain>ATCC 25285 / DSM 2151 / CCUG 4856 / JCM 11019 / LMG 10263 / NCTC 9343 / Onslow / VPI 2553 / EN-2</strain>
    </source>
</reference>
<accession>Q5LIT7</accession>
<gene>
    <name evidence="1" type="primary">cysS</name>
    <name type="ordered locus">BF0161</name>
</gene>
<comment type="catalytic activity">
    <reaction evidence="1">
        <text>tRNA(Cys) + L-cysteine + ATP = L-cysteinyl-tRNA(Cys) + AMP + diphosphate</text>
        <dbReference type="Rhea" id="RHEA:17773"/>
        <dbReference type="Rhea" id="RHEA-COMP:9661"/>
        <dbReference type="Rhea" id="RHEA-COMP:9679"/>
        <dbReference type="ChEBI" id="CHEBI:30616"/>
        <dbReference type="ChEBI" id="CHEBI:33019"/>
        <dbReference type="ChEBI" id="CHEBI:35235"/>
        <dbReference type="ChEBI" id="CHEBI:78442"/>
        <dbReference type="ChEBI" id="CHEBI:78517"/>
        <dbReference type="ChEBI" id="CHEBI:456215"/>
        <dbReference type="EC" id="6.1.1.16"/>
    </reaction>
</comment>
<comment type="cofactor">
    <cofactor evidence="1">
        <name>Zn(2+)</name>
        <dbReference type="ChEBI" id="CHEBI:29105"/>
    </cofactor>
    <text evidence="1">Binds 1 zinc ion per subunit.</text>
</comment>
<comment type="subunit">
    <text evidence="1">Monomer.</text>
</comment>
<comment type="subcellular location">
    <subcellularLocation>
        <location evidence="1">Cytoplasm</location>
    </subcellularLocation>
</comment>
<comment type="similarity">
    <text evidence="1">Belongs to the class-I aminoacyl-tRNA synthetase family.</text>
</comment>
<organism>
    <name type="scientific">Bacteroides fragilis (strain ATCC 25285 / DSM 2151 / CCUG 4856 / JCM 11019 / LMG 10263 / NCTC 9343 / Onslow / VPI 2553 / EN-2)</name>
    <dbReference type="NCBI Taxonomy" id="272559"/>
    <lineage>
        <taxon>Bacteria</taxon>
        <taxon>Pseudomonadati</taxon>
        <taxon>Bacteroidota</taxon>
        <taxon>Bacteroidia</taxon>
        <taxon>Bacteroidales</taxon>
        <taxon>Bacteroidaceae</taxon>
        <taxon>Bacteroides</taxon>
    </lineage>
</organism>
<keyword id="KW-0030">Aminoacyl-tRNA synthetase</keyword>
<keyword id="KW-0067">ATP-binding</keyword>
<keyword id="KW-0963">Cytoplasm</keyword>
<keyword id="KW-0436">Ligase</keyword>
<keyword id="KW-0479">Metal-binding</keyword>
<keyword id="KW-0547">Nucleotide-binding</keyword>
<keyword id="KW-0648">Protein biosynthesis</keyword>
<keyword id="KW-0862">Zinc</keyword>
<feature type="chain" id="PRO_0000240890" description="Cysteine--tRNA ligase">
    <location>
        <begin position="1"/>
        <end position="491"/>
    </location>
</feature>
<feature type="short sequence motif" description="'HIGH' region">
    <location>
        <begin position="33"/>
        <end position="43"/>
    </location>
</feature>
<feature type="short sequence motif" description="'KMSKS' region">
    <location>
        <begin position="283"/>
        <end position="287"/>
    </location>
</feature>
<feature type="binding site" evidence="1">
    <location>
        <position position="31"/>
    </location>
    <ligand>
        <name>Zn(2+)</name>
        <dbReference type="ChEBI" id="CHEBI:29105"/>
    </ligand>
</feature>
<feature type="binding site" evidence="1">
    <location>
        <position position="226"/>
    </location>
    <ligand>
        <name>Zn(2+)</name>
        <dbReference type="ChEBI" id="CHEBI:29105"/>
    </ligand>
</feature>
<feature type="binding site" evidence="1">
    <location>
        <position position="251"/>
    </location>
    <ligand>
        <name>Zn(2+)</name>
        <dbReference type="ChEBI" id="CHEBI:29105"/>
    </ligand>
</feature>
<feature type="binding site" evidence="1">
    <location>
        <position position="255"/>
    </location>
    <ligand>
        <name>Zn(2+)</name>
        <dbReference type="ChEBI" id="CHEBI:29105"/>
    </ligand>
</feature>
<feature type="binding site" evidence="1">
    <location>
        <position position="286"/>
    </location>
    <ligand>
        <name>ATP</name>
        <dbReference type="ChEBI" id="CHEBI:30616"/>
    </ligand>
</feature>
<name>SYC_BACFN</name>
<evidence type="ECO:0000255" key="1">
    <source>
        <dbReference type="HAMAP-Rule" id="MF_00041"/>
    </source>
</evidence>
<dbReference type="EC" id="6.1.1.16" evidence="1"/>
<dbReference type="EMBL" id="CR626927">
    <property type="protein sequence ID" value="CAH05939.1"/>
    <property type="molecule type" value="Genomic_DNA"/>
</dbReference>
<dbReference type="RefSeq" id="WP_005801929.1">
    <property type="nucleotide sequence ID" value="NZ_UFTH01000001.1"/>
</dbReference>
<dbReference type="SMR" id="Q5LIT7"/>
<dbReference type="PaxDb" id="272559-BF9343_0160"/>
<dbReference type="GeneID" id="60368362"/>
<dbReference type="KEGG" id="bfs:BF9343_0160"/>
<dbReference type="eggNOG" id="COG0215">
    <property type="taxonomic scope" value="Bacteria"/>
</dbReference>
<dbReference type="HOGENOM" id="CLU_013528_0_1_10"/>
<dbReference type="Proteomes" id="UP000006731">
    <property type="component" value="Chromosome"/>
</dbReference>
<dbReference type="GO" id="GO:0005829">
    <property type="term" value="C:cytosol"/>
    <property type="evidence" value="ECO:0007669"/>
    <property type="project" value="TreeGrafter"/>
</dbReference>
<dbReference type="GO" id="GO:0005524">
    <property type="term" value="F:ATP binding"/>
    <property type="evidence" value="ECO:0007669"/>
    <property type="project" value="UniProtKB-UniRule"/>
</dbReference>
<dbReference type="GO" id="GO:0004817">
    <property type="term" value="F:cysteine-tRNA ligase activity"/>
    <property type="evidence" value="ECO:0007669"/>
    <property type="project" value="UniProtKB-UniRule"/>
</dbReference>
<dbReference type="GO" id="GO:0008270">
    <property type="term" value="F:zinc ion binding"/>
    <property type="evidence" value="ECO:0007669"/>
    <property type="project" value="UniProtKB-UniRule"/>
</dbReference>
<dbReference type="GO" id="GO:0006423">
    <property type="term" value="P:cysteinyl-tRNA aminoacylation"/>
    <property type="evidence" value="ECO:0007669"/>
    <property type="project" value="UniProtKB-UniRule"/>
</dbReference>
<dbReference type="CDD" id="cd00672">
    <property type="entry name" value="CysRS_core"/>
    <property type="match status" value="1"/>
</dbReference>
<dbReference type="FunFam" id="3.40.50.620:FF:000140">
    <property type="entry name" value="Cysteine--tRNA ligase"/>
    <property type="match status" value="1"/>
</dbReference>
<dbReference type="Gene3D" id="1.20.120.1910">
    <property type="entry name" value="Cysteine-tRNA ligase, C-terminal anti-codon recognition domain"/>
    <property type="match status" value="1"/>
</dbReference>
<dbReference type="Gene3D" id="3.40.50.620">
    <property type="entry name" value="HUPs"/>
    <property type="match status" value="1"/>
</dbReference>
<dbReference type="HAMAP" id="MF_00041">
    <property type="entry name" value="Cys_tRNA_synth"/>
    <property type="match status" value="1"/>
</dbReference>
<dbReference type="InterPro" id="IPR015803">
    <property type="entry name" value="Cys-tRNA-ligase"/>
</dbReference>
<dbReference type="InterPro" id="IPR015273">
    <property type="entry name" value="Cys-tRNA-synt_Ia_DALR"/>
</dbReference>
<dbReference type="InterPro" id="IPR024909">
    <property type="entry name" value="Cys-tRNA/MSH_ligase"/>
</dbReference>
<dbReference type="InterPro" id="IPR056411">
    <property type="entry name" value="CysS_C"/>
</dbReference>
<dbReference type="InterPro" id="IPR014729">
    <property type="entry name" value="Rossmann-like_a/b/a_fold"/>
</dbReference>
<dbReference type="InterPro" id="IPR032678">
    <property type="entry name" value="tRNA-synt_1_cat_dom"/>
</dbReference>
<dbReference type="InterPro" id="IPR009080">
    <property type="entry name" value="tRNAsynth_Ia_anticodon-bd"/>
</dbReference>
<dbReference type="NCBIfam" id="TIGR00435">
    <property type="entry name" value="cysS"/>
    <property type="match status" value="1"/>
</dbReference>
<dbReference type="PANTHER" id="PTHR10890:SF3">
    <property type="entry name" value="CYSTEINE--TRNA LIGASE, CYTOPLASMIC"/>
    <property type="match status" value="1"/>
</dbReference>
<dbReference type="PANTHER" id="PTHR10890">
    <property type="entry name" value="CYSTEINYL-TRNA SYNTHETASE"/>
    <property type="match status" value="1"/>
</dbReference>
<dbReference type="Pfam" id="PF23493">
    <property type="entry name" value="CysS_C"/>
    <property type="match status" value="1"/>
</dbReference>
<dbReference type="Pfam" id="PF09190">
    <property type="entry name" value="DALR_2"/>
    <property type="match status" value="1"/>
</dbReference>
<dbReference type="Pfam" id="PF01406">
    <property type="entry name" value="tRNA-synt_1e"/>
    <property type="match status" value="1"/>
</dbReference>
<dbReference type="PRINTS" id="PR00983">
    <property type="entry name" value="TRNASYNTHCYS"/>
</dbReference>
<dbReference type="SMART" id="SM00840">
    <property type="entry name" value="DALR_2"/>
    <property type="match status" value="1"/>
</dbReference>
<dbReference type="SUPFAM" id="SSF47323">
    <property type="entry name" value="Anticodon-binding domain of a subclass of class I aminoacyl-tRNA synthetases"/>
    <property type="match status" value="1"/>
</dbReference>
<dbReference type="SUPFAM" id="SSF52374">
    <property type="entry name" value="Nucleotidylyl transferase"/>
    <property type="match status" value="1"/>
</dbReference>
<sequence length="491" mass="55741">MEHQLTIYNTLDRKKELFVPLHAPHVGMYVCGPTVYGDAHLGHARPAITFDVLFRYLTRLGYKVRYVRNITDVGHLEHDADEGEDKIAKKARLEQLEPMEVVQYYLNRYHKAMEALNVLPPSIEPHASGHIIEQIELVKKILDAGYAYESQGSVYFDVAKYNKDYHYGKLSGRNLDDVLNTTRELDGQEEKHNPADFALWKRAQPEHIMRWPSPWGDGFPGWHAECTAMGRKYLGEHFDIHGGGMDLIFPHHECEIAQSVASQGDDMVHYWMHNNMITINGTKMGKSLGNFITLDEFFSGSHKLLTQAYSPMTIRFFILQAHYRSPVDFSNEALQAAEKGLSRLMEAVDSLEKITPAATSNVDVKSLRTKCFEAMNDDLNTPIVISHLFDGAKMINNIIAGNNTISADDLKDLKEVFHTFCFDILGLKEEIGSSDGREAAYGKVVDMLLEQRVKAKANKDWATSDLIRNELTALGFEIKDTKDGFEWKLNK</sequence>